<evidence type="ECO:0000250" key="1">
    <source>
        <dbReference type="UniProtKB" id="P32131"/>
    </source>
</evidence>
<evidence type="ECO:0000250" key="2">
    <source>
        <dbReference type="UniProtKB" id="Q9HA92"/>
    </source>
</evidence>
<evidence type="ECO:0000255" key="3"/>
<evidence type="ECO:0000255" key="4">
    <source>
        <dbReference type="PROSITE-ProRule" id="PRU01266"/>
    </source>
</evidence>
<evidence type="ECO:0000305" key="5"/>
<dbReference type="EMBL" id="AL645809">
    <property type="status" value="NOT_ANNOTATED_CDS"/>
    <property type="molecule type" value="Genomic_DNA"/>
</dbReference>
<dbReference type="EMBL" id="BC056485">
    <property type="protein sequence ID" value="AAH56485.1"/>
    <property type="molecule type" value="mRNA"/>
</dbReference>
<dbReference type="EMBL" id="BC139274">
    <property type="protein sequence ID" value="AAI39275.1"/>
    <property type="molecule type" value="mRNA"/>
</dbReference>
<dbReference type="EMBL" id="BC139276">
    <property type="protein sequence ID" value="AAI39277.1"/>
    <property type="molecule type" value="mRNA"/>
</dbReference>
<dbReference type="CCDS" id="CCDS25258.1"/>
<dbReference type="RefSeq" id="NP_001013399.1">
    <property type="nucleotide sequence ID" value="NM_001013381.2"/>
</dbReference>
<dbReference type="RefSeq" id="XP_011247294.1">
    <property type="nucleotide sequence ID" value="XM_011248992.4"/>
</dbReference>
<dbReference type="SMR" id="Q5SUV1"/>
<dbReference type="FunCoup" id="Q5SUV1">
    <property type="interactions" value="641"/>
</dbReference>
<dbReference type="STRING" id="10090.ENSMUSP00000037361"/>
<dbReference type="PhosphoSitePlus" id="Q5SUV1"/>
<dbReference type="PaxDb" id="10090-ENSMUSP00000037361"/>
<dbReference type="ProteomicsDB" id="262737"/>
<dbReference type="Antibodypedia" id="18086">
    <property type="antibodies" value="130 antibodies from 23 providers"/>
</dbReference>
<dbReference type="DNASU" id="237926"/>
<dbReference type="Ensembl" id="ENSMUST00000040487.4">
    <property type="protein sequence ID" value="ENSMUSP00000037361.4"/>
    <property type="gene ID" value="ENSMUSG00000039096.11"/>
</dbReference>
<dbReference type="GeneID" id="237926"/>
<dbReference type="KEGG" id="mmu:237926"/>
<dbReference type="UCSC" id="uc007kza.2">
    <property type="organism name" value="mouse"/>
</dbReference>
<dbReference type="AGR" id="MGI:3039628"/>
<dbReference type="CTD" id="55316"/>
<dbReference type="MGI" id="MGI:3039628">
    <property type="gene designation" value="Rsad1"/>
</dbReference>
<dbReference type="VEuPathDB" id="HostDB:ENSMUSG00000039096"/>
<dbReference type="eggNOG" id="ENOG502QRH0">
    <property type="taxonomic scope" value="Eukaryota"/>
</dbReference>
<dbReference type="GeneTree" id="ENSGT00390000011216"/>
<dbReference type="HOGENOM" id="CLU_027579_0_0_1"/>
<dbReference type="InParanoid" id="Q5SUV1"/>
<dbReference type="OMA" id="HIPWCVR"/>
<dbReference type="OrthoDB" id="431409at2759"/>
<dbReference type="PhylomeDB" id="Q5SUV1"/>
<dbReference type="TreeFam" id="TF332416"/>
<dbReference type="BioGRID-ORCS" id="237926">
    <property type="hits" value="4 hits in 77 CRISPR screens"/>
</dbReference>
<dbReference type="PRO" id="PR:Q5SUV1"/>
<dbReference type="Proteomes" id="UP000000589">
    <property type="component" value="Chromosome 11"/>
</dbReference>
<dbReference type="RNAct" id="Q5SUV1">
    <property type="molecule type" value="protein"/>
</dbReference>
<dbReference type="Bgee" id="ENSMUSG00000039096">
    <property type="expression patterns" value="Expressed in interventricular septum and 209 other cell types or tissues"/>
</dbReference>
<dbReference type="GO" id="GO:0005739">
    <property type="term" value="C:mitochondrion"/>
    <property type="evidence" value="ECO:0007005"/>
    <property type="project" value="MGI"/>
</dbReference>
<dbReference type="GO" id="GO:0051539">
    <property type="term" value="F:4 iron, 4 sulfur cluster binding"/>
    <property type="evidence" value="ECO:0007669"/>
    <property type="project" value="UniProtKB-KW"/>
</dbReference>
<dbReference type="GO" id="GO:0004109">
    <property type="term" value="F:coproporphyrinogen oxidase activity"/>
    <property type="evidence" value="ECO:0007669"/>
    <property type="project" value="InterPro"/>
</dbReference>
<dbReference type="GO" id="GO:0020037">
    <property type="term" value="F:heme binding"/>
    <property type="evidence" value="ECO:0007669"/>
    <property type="project" value="Ensembl"/>
</dbReference>
<dbReference type="GO" id="GO:0046872">
    <property type="term" value="F:metal ion binding"/>
    <property type="evidence" value="ECO:0007669"/>
    <property type="project" value="UniProtKB-KW"/>
</dbReference>
<dbReference type="GO" id="GO:0006779">
    <property type="term" value="P:porphyrin-containing compound biosynthetic process"/>
    <property type="evidence" value="ECO:0007669"/>
    <property type="project" value="InterPro"/>
</dbReference>
<dbReference type="CDD" id="cd01335">
    <property type="entry name" value="Radical_SAM"/>
    <property type="match status" value="1"/>
</dbReference>
<dbReference type="Gene3D" id="3.20.20.70">
    <property type="entry name" value="Aldolase class I"/>
    <property type="match status" value="1"/>
</dbReference>
<dbReference type="InterPro" id="IPR013785">
    <property type="entry name" value="Aldolase_TIM"/>
</dbReference>
<dbReference type="InterPro" id="IPR034505">
    <property type="entry name" value="Coproporphyrinogen-III_oxidase"/>
</dbReference>
<dbReference type="InterPro" id="IPR006638">
    <property type="entry name" value="Elp3/MiaA/NifB-like_rSAM"/>
</dbReference>
<dbReference type="InterPro" id="IPR010723">
    <property type="entry name" value="HemN_C"/>
</dbReference>
<dbReference type="InterPro" id="IPR004559">
    <property type="entry name" value="HemW-like"/>
</dbReference>
<dbReference type="InterPro" id="IPR007197">
    <property type="entry name" value="rSAM"/>
</dbReference>
<dbReference type="NCBIfam" id="TIGR00539">
    <property type="entry name" value="hemN_rel"/>
    <property type="match status" value="1"/>
</dbReference>
<dbReference type="PANTHER" id="PTHR13932">
    <property type="entry name" value="COPROPORPHYRINIGEN III OXIDASE"/>
    <property type="match status" value="1"/>
</dbReference>
<dbReference type="PANTHER" id="PTHR13932:SF5">
    <property type="entry name" value="RADICAL S-ADENOSYL METHIONINE DOMAIN-CONTAINING PROTEIN 1, MITOCHONDRIAL"/>
    <property type="match status" value="1"/>
</dbReference>
<dbReference type="Pfam" id="PF06969">
    <property type="entry name" value="HemN_C"/>
    <property type="match status" value="1"/>
</dbReference>
<dbReference type="Pfam" id="PF04055">
    <property type="entry name" value="Radical_SAM"/>
    <property type="match status" value="1"/>
</dbReference>
<dbReference type="SFLD" id="SFLDG01065">
    <property type="entry name" value="anaerobic_coproporphyrinogen-I"/>
    <property type="match status" value="1"/>
</dbReference>
<dbReference type="SFLD" id="SFLDG01082">
    <property type="entry name" value="B12-binding_domain_containing"/>
    <property type="match status" value="1"/>
</dbReference>
<dbReference type="SFLD" id="SFLDF00562">
    <property type="entry name" value="HemN-like__clustered_with_heat"/>
    <property type="match status" value="1"/>
</dbReference>
<dbReference type="SFLD" id="SFLDF00288">
    <property type="entry name" value="HemN-like__clustered_with_nucl"/>
    <property type="match status" value="1"/>
</dbReference>
<dbReference type="SMART" id="SM00729">
    <property type="entry name" value="Elp3"/>
    <property type="match status" value="1"/>
</dbReference>
<dbReference type="SUPFAM" id="SSF102114">
    <property type="entry name" value="Radical SAM enzymes"/>
    <property type="match status" value="1"/>
</dbReference>
<dbReference type="PROSITE" id="PS51918">
    <property type="entry name" value="RADICAL_SAM"/>
    <property type="match status" value="1"/>
</dbReference>
<sequence>MVPSGVRTGRWVAAARAAQRRPRVDSLGQPPSPESASTRAALYVHWPYCEKRCSYCNFNKYIPRGVEEGTVRNCLVTEARTLLRLSGVQRVESVFFGGGTPSLASPHTVAAVLEAVAQEVYLPADSEVTLEANPTSAPGPRLAAFGAAGVNRLSIGLQSLDDAELQLLGRTHSASDALRTLAEARLLFPGRVSVDLMLGLPAQKVEPWLQQLQKLLYHCDDHLSLYQLTLERGTSLFAQVQQGTLPAPDPDLAAEMYQEGRTVLRDAGFRQYEVSNFARNGALSTHNWTYWQCGQYLGIGPGAHGRFVPQGTGGHTREARIQTLEPDNWMKEVTLFGHGTRKCVRLGKLELLEEVLAMGLRTDVGVTHQHWQQFEPQLTLWDVFGASKEVEELLAQGLLLLDYRGLRCSWEGLAVLDSLLLTLLPQLQEAWQHRPSSPVSGG</sequence>
<feature type="transit peptide" description="Mitochondrion" evidence="3">
    <location>
        <begin position="1"/>
        <end position="17"/>
    </location>
</feature>
<feature type="chain" id="PRO_0000284610" description="Radical S-adenosyl methionine domain-containing protein 1, mitochondrial">
    <location>
        <begin position="18"/>
        <end position="442"/>
    </location>
</feature>
<feature type="domain" description="Radical SAM core" evidence="4">
    <location>
        <begin position="34"/>
        <end position="270"/>
    </location>
</feature>
<feature type="binding site" evidence="1">
    <location>
        <position position="43"/>
    </location>
    <ligand>
        <name>S-adenosyl-L-methionine</name>
        <dbReference type="ChEBI" id="CHEBI:59789"/>
        <label>1</label>
    </ligand>
</feature>
<feature type="binding site" evidence="1">
    <location>
        <position position="49"/>
    </location>
    <ligand>
        <name>[4Fe-4S] cluster</name>
        <dbReference type="ChEBI" id="CHEBI:49883"/>
        <note>4Fe-4S-S-AdoMet</note>
    </ligand>
</feature>
<feature type="binding site" evidence="1">
    <location>
        <position position="53"/>
    </location>
    <ligand>
        <name>[4Fe-4S] cluster</name>
        <dbReference type="ChEBI" id="CHEBI:49883"/>
        <note>4Fe-4S-S-AdoMet</note>
    </ligand>
</feature>
<feature type="binding site" evidence="1">
    <location>
        <position position="56"/>
    </location>
    <ligand>
        <name>[4Fe-4S] cluster</name>
        <dbReference type="ChEBI" id="CHEBI:49883"/>
        <note>4Fe-4S-S-AdoMet</note>
    </ligand>
</feature>
<feature type="binding site" evidence="1">
    <location>
        <position position="98"/>
    </location>
    <ligand>
        <name>S-adenosyl-L-methionine</name>
        <dbReference type="ChEBI" id="CHEBI:59789"/>
        <label>1</label>
    </ligand>
</feature>
<feature type="binding site" evidence="1">
    <location>
        <begin position="99"/>
        <end position="100"/>
    </location>
    <ligand>
        <name>S-adenosyl-L-methionine</name>
        <dbReference type="ChEBI" id="CHEBI:59789"/>
        <label>2</label>
    </ligand>
</feature>
<feature type="binding site" evidence="1">
    <location>
        <position position="131"/>
    </location>
    <ligand>
        <name>S-adenosyl-L-methionine</name>
        <dbReference type="ChEBI" id="CHEBI:59789"/>
        <label>1</label>
    </ligand>
</feature>
<feature type="binding site" evidence="1">
    <location>
        <position position="158"/>
    </location>
    <ligand>
        <name>S-adenosyl-L-methionine</name>
        <dbReference type="ChEBI" id="CHEBI:59789"/>
        <label>2</label>
    </ligand>
</feature>
<feature type="binding site" evidence="1">
    <location>
        <position position="170"/>
    </location>
    <ligand>
        <name>S-adenosyl-L-methionine</name>
        <dbReference type="ChEBI" id="CHEBI:59789"/>
        <label>2</label>
    </ligand>
</feature>
<feature type="binding site" evidence="1">
    <location>
        <position position="195"/>
    </location>
    <ligand>
        <name>S-adenosyl-L-methionine</name>
        <dbReference type="ChEBI" id="CHEBI:59789"/>
        <label>2</label>
    </ligand>
</feature>
<keyword id="KW-0004">4Fe-4S</keyword>
<keyword id="KW-0143">Chaperone</keyword>
<keyword id="KW-0349">Heme</keyword>
<keyword id="KW-0408">Iron</keyword>
<keyword id="KW-0411">Iron-sulfur</keyword>
<keyword id="KW-0479">Metal-binding</keyword>
<keyword id="KW-0496">Mitochondrion</keyword>
<keyword id="KW-1185">Reference proteome</keyword>
<keyword id="KW-0949">S-adenosyl-L-methionine</keyword>
<keyword id="KW-0809">Transit peptide</keyword>
<reference key="1">
    <citation type="journal article" date="2009" name="PLoS Biol.">
        <title>Lineage-specific biology revealed by a finished genome assembly of the mouse.</title>
        <authorList>
            <person name="Church D.M."/>
            <person name="Goodstadt L."/>
            <person name="Hillier L.W."/>
            <person name="Zody M.C."/>
            <person name="Goldstein S."/>
            <person name="She X."/>
            <person name="Bult C.J."/>
            <person name="Agarwala R."/>
            <person name="Cherry J.L."/>
            <person name="DiCuccio M."/>
            <person name="Hlavina W."/>
            <person name="Kapustin Y."/>
            <person name="Meric P."/>
            <person name="Maglott D."/>
            <person name="Birtle Z."/>
            <person name="Marques A.C."/>
            <person name="Graves T."/>
            <person name="Zhou S."/>
            <person name="Teague B."/>
            <person name="Potamousis K."/>
            <person name="Churas C."/>
            <person name="Place M."/>
            <person name="Herschleb J."/>
            <person name="Runnheim R."/>
            <person name="Forrest D."/>
            <person name="Amos-Landgraf J."/>
            <person name="Schwartz D.C."/>
            <person name="Cheng Z."/>
            <person name="Lindblad-Toh K."/>
            <person name="Eichler E.E."/>
            <person name="Ponting C.P."/>
        </authorList>
    </citation>
    <scope>NUCLEOTIDE SEQUENCE [LARGE SCALE GENOMIC DNA]</scope>
    <source>
        <strain>C57BL/6J</strain>
    </source>
</reference>
<reference key="2">
    <citation type="journal article" date="2004" name="Genome Res.">
        <title>The status, quality, and expansion of the NIH full-length cDNA project: the Mammalian Gene Collection (MGC).</title>
        <authorList>
            <consortium name="The MGC Project Team"/>
        </authorList>
    </citation>
    <scope>NUCLEOTIDE SEQUENCE [LARGE SCALE MRNA]</scope>
    <source>
        <strain>C57BL/6J</strain>
        <tissue>Brain</tissue>
    </source>
</reference>
<protein>
    <recommendedName>
        <fullName>Radical S-adenosyl methionine domain-containing protein 1, mitochondrial</fullName>
    </recommendedName>
    <alternativeName>
        <fullName>Putative heme chaperone</fullName>
    </alternativeName>
</protein>
<organism>
    <name type="scientific">Mus musculus</name>
    <name type="common">Mouse</name>
    <dbReference type="NCBI Taxonomy" id="10090"/>
    <lineage>
        <taxon>Eukaryota</taxon>
        <taxon>Metazoa</taxon>
        <taxon>Chordata</taxon>
        <taxon>Craniata</taxon>
        <taxon>Vertebrata</taxon>
        <taxon>Euteleostomi</taxon>
        <taxon>Mammalia</taxon>
        <taxon>Eutheria</taxon>
        <taxon>Euarchontoglires</taxon>
        <taxon>Glires</taxon>
        <taxon>Rodentia</taxon>
        <taxon>Myomorpha</taxon>
        <taxon>Muroidea</taxon>
        <taxon>Muridae</taxon>
        <taxon>Murinae</taxon>
        <taxon>Mus</taxon>
        <taxon>Mus</taxon>
    </lineage>
</organism>
<comment type="function">
    <text evidence="1 2">May be a heme chaperone, appears to bind heme. Homologous bacterial proteins do not have oxygen-independent coproporphyrinogen-III oxidase activity (By similarity). Binds 1 [4Fe-4S] cluster. The cluster is coordinated with 3 cysteines and an exchangeable S-adenosyl-L-methionine (By similarity).</text>
</comment>
<comment type="cofactor">
    <cofactor evidence="4">
        <name>[4Fe-4S] cluster</name>
        <dbReference type="ChEBI" id="CHEBI:49883"/>
    </cofactor>
</comment>
<comment type="subcellular location">
    <subcellularLocation>
        <location evidence="5">Mitochondrion</location>
    </subcellularLocation>
</comment>
<comment type="miscellaneous">
    <text evidence="1">Might carry two S-adenosyl-L-methionine binding sites with only one binding to the iron-sulfur cluster.</text>
</comment>
<comment type="similarity">
    <text evidence="5">Belongs to the anaerobic coproporphyrinogen-III oxidase family. HemW subfamily.</text>
</comment>
<name>RSAD1_MOUSE</name>
<accession>Q5SUV1</accession>
<accession>B2RTE1</accession>
<accession>Q6PHM8</accession>
<proteinExistence type="evidence at transcript level"/>
<gene>
    <name type="primary">Rsad1</name>
</gene>